<name>RL16_GEMAT</name>
<evidence type="ECO:0000255" key="1">
    <source>
        <dbReference type="HAMAP-Rule" id="MF_01342"/>
    </source>
</evidence>
<evidence type="ECO:0000305" key="2"/>
<protein>
    <recommendedName>
        <fullName evidence="1">Large ribosomal subunit protein uL16</fullName>
    </recommendedName>
    <alternativeName>
        <fullName evidence="2">50S ribosomal protein L16</fullName>
    </alternativeName>
</protein>
<proteinExistence type="inferred from homology"/>
<dbReference type="EMBL" id="AP009153">
    <property type="protein sequence ID" value="BAH37922.1"/>
    <property type="molecule type" value="Genomic_DNA"/>
</dbReference>
<dbReference type="RefSeq" id="WP_012682369.1">
    <property type="nucleotide sequence ID" value="NC_012489.1"/>
</dbReference>
<dbReference type="SMR" id="C1A6R2"/>
<dbReference type="STRING" id="379066.GAU_0880"/>
<dbReference type="KEGG" id="gau:GAU_0880"/>
<dbReference type="eggNOG" id="COG0197">
    <property type="taxonomic scope" value="Bacteria"/>
</dbReference>
<dbReference type="HOGENOM" id="CLU_078858_2_1_0"/>
<dbReference type="OrthoDB" id="9802589at2"/>
<dbReference type="Proteomes" id="UP000002209">
    <property type="component" value="Chromosome"/>
</dbReference>
<dbReference type="GO" id="GO:0022625">
    <property type="term" value="C:cytosolic large ribosomal subunit"/>
    <property type="evidence" value="ECO:0007669"/>
    <property type="project" value="TreeGrafter"/>
</dbReference>
<dbReference type="GO" id="GO:0019843">
    <property type="term" value="F:rRNA binding"/>
    <property type="evidence" value="ECO:0007669"/>
    <property type="project" value="UniProtKB-UniRule"/>
</dbReference>
<dbReference type="GO" id="GO:0003735">
    <property type="term" value="F:structural constituent of ribosome"/>
    <property type="evidence" value="ECO:0007669"/>
    <property type="project" value="InterPro"/>
</dbReference>
<dbReference type="GO" id="GO:0000049">
    <property type="term" value="F:tRNA binding"/>
    <property type="evidence" value="ECO:0007669"/>
    <property type="project" value="UniProtKB-KW"/>
</dbReference>
<dbReference type="GO" id="GO:0006412">
    <property type="term" value="P:translation"/>
    <property type="evidence" value="ECO:0007669"/>
    <property type="project" value="UniProtKB-UniRule"/>
</dbReference>
<dbReference type="CDD" id="cd01433">
    <property type="entry name" value="Ribosomal_L16_L10e"/>
    <property type="match status" value="1"/>
</dbReference>
<dbReference type="FunFam" id="3.90.1170.10:FF:000001">
    <property type="entry name" value="50S ribosomal protein L16"/>
    <property type="match status" value="1"/>
</dbReference>
<dbReference type="Gene3D" id="3.90.1170.10">
    <property type="entry name" value="Ribosomal protein L10e/L16"/>
    <property type="match status" value="1"/>
</dbReference>
<dbReference type="HAMAP" id="MF_01342">
    <property type="entry name" value="Ribosomal_uL16"/>
    <property type="match status" value="1"/>
</dbReference>
<dbReference type="InterPro" id="IPR047873">
    <property type="entry name" value="Ribosomal_uL16"/>
</dbReference>
<dbReference type="InterPro" id="IPR000114">
    <property type="entry name" value="Ribosomal_uL16_bact-type"/>
</dbReference>
<dbReference type="InterPro" id="IPR020798">
    <property type="entry name" value="Ribosomal_uL16_CS"/>
</dbReference>
<dbReference type="InterPro" id="IPR016180">
    <property type="entry name" value="Ribosomal_uL16_dom"/>
</dbReference>
<dbReference type="InterPro" id="IPR036920">
    <property type="entry name" value="Ribosomal_uL16_sf"/>
</dbReference>
<dbReference type="NCBIfam" id="TIGR01164">
    <property type="entry name" value="rplP_bact"/>
    <property type="match status" value="1"/>
</dbReference>
<dbReference type="PANTHER" id="PTHR12220">
    <property type="entry name" value="50S/60S RIBOSOMAL PROTEIN L16"/>
    <property type="match status" value="1"/>
</dbReference>
<dbReference type="PANTHER" id="PTHR12220:SF13">
    <property type="entry name" value="LARGE RIBOSOMAL SUBUNIT PROTEIN UL16M"/>
    <property type="match status" value="1"/>
</dbReference>
<dbReference type="Pfam" id="PF00252">
    <property type="entry name" value="Ribosomal_L16"/>
    <property type="match status" value="1"/>
</dbReference>
<dbReference type="PRINTS" id="PR00060">
    <property type="entry name" value="RIBOSOMALL16"/>
</dbReference>
<dbReference type="SUPFAM" id="SSF54686">
    <property type="entry name" value="Ribosomal protein L16p/L10e"/>
    <property type="match status" value="1"/>
</dbReference>
<dbReference type="PROSITE" id="PS00586">
    <property type="entry name" value="RIBOSOMAL_L16_1"/>
    <property type="match status" value="1"/>
</dbReference>
<dbReference type="PROSITE" id="PS00701">
    <property type="entry name" value="RIBOSOMAL_L16_2"/>
    <property type="match status" value="1"/>
</dbReference>
<organism>
    <name type="scientific">Gemmatimonas aurantiaca (strain DSM 14586 / JCM 11422 / NBRC 100505 / T-27)</name>
    <dbReference type="NCBI Taxonomy" id="379066"/>
    <lineage>
        <taxon>Bacteria</taxon>
        <taxon>Pseudomonadati</taxon>
        <taxon>Gemmatimonadota</taxon>
        <taxon>Gemmatimonadia</taxon>
        <taxon>Gemmatimonadales</taxon>
        <taxon>Gemmatimonadaceae</taxon>
        <taxon>Gemmatimonas</taxon>
    </lineage>
</organism>
<keyword id="KW-1185">Reference proteome</keyword>
<keyword id="KW-0687">Ribonucleoprotein</keyword>
<keyword id="KW-0689">Ribosomal protein</keyword>
<keyword id="KW-0694">RNA-binding</keyword>
<keyword id="KW-0699">rRNA-binding</keyword>
<keyword id="KW-0820">tRNA-binding</keyword>
<feature type="chain" id="PRO_1000214733" description="Large ribosomal subunit protein uL16">
    <location>
        <begin position="1"/>
        <end position="142"/>
    </location>
</feature>
<reference key="1">
    <citation type="submission" date="2006-03" db="EMBL/GenBank/DDBJ databases">
        <title>Complete genome sequence of Gemmatimonas aurantiaca T-27 that represents a novel phylum Gemmatimonadetes.</title>
        <authorList>
            <person name="Takasaki K."/>
            <person name="Ichikawa N."/>
            <person name="Miura H."/>
            <person name="Matsushita S."/>
            <person name="Watanabe Y."/>
            <person name="Oguchi A."/>
            <person name="Ankai A."/>
            <person name="Yashiro I."/>
            <person name="Takahashi M."/>
            <person name="Terui Y."/>
            <person name="Fukui S."/>
            <person name="Yokoyama H."/>
            <person name="Tanikawa S."/>
            <person name="Hanada S."/>
            <person name="Kamagata Y."/>
            <person name="Fujita N."/>
        </authorList>
    </citation>
    <scope>NUCLEOTIDE SEQUENCE [LARGE SCALE GENOMIC DNA]</scope>
    <source>
        <strain>DSM 14586 / JCM 11422 / NBRC 100505 / T-27</strain>
    </source>
</reference>
<sequence length="142" mass="15740">MLSPKRVKFRKMFKGRMTGLAHRGSDVSFGTYGLQALEPGWVTSRQIEACRVAMTRHIKRGGKVWIRIFPDKPITKKPAETRMGKGKGSPELWVAVVKPGRVMFEIEGVSKELAETAMSLAAAKLGVKTKFVAREEAVTHEG</sequence>
<comment type="function">
    <text evidence="1">Binds 23S rRNA and is also seen to make contacts with the A and possibly P site tRNAs.</text>
</comment>
<comment type="subunit">
    <text evidence="1">Part of the 50S ribosomal subunit.</text>
</comment>
<comment type="similarity">
    <text evidence="1">Belongs to the universal ribosomal protein uL16 family.</text>
</comment>
<accession>C1A6R2</accession>
<gene>
    <name evidence="1" type="primary">rplP</name>
    <name type="ordered locus">GAU_0880</name>
</gene>